<proteinExistence type="inferred from homology"/>
<accession>B0K714</accession>
<comment type="function">
    <text evidence="1">Bifunctional serine/threonine kinase and phosphorylase involved in the regulation of the pyruvate, phosphate dikinase (PPDK) by catalyzing its phosphorylation/dephosphorylation.</text>
</comment>
<comment type="catalytic activity">
    <reaction evidence="1">
        <text>N(tele)-phospho-L-histidyl/L-threonyl-[pyruvate, phosphate dikinase] + ADP = N(tele)-phospho-L-histidyl/O-phospho-L-threonyl-[pyruvate, phosphate dikinase] + AMP + H(+)</text>
        <dbReference type="Rhea" id="RHEA:43692"/>
        <dbReference type="Rhea" id="RHEA-COMP:10650"/>
        <dbReference type="Rhea" id="RHEA-COMP:10651"/>
        <dbReference type="ChEBI" id="CHEBI:15378"/>
        <dbReference type="ChEBI" id="CHEBI:30013"/>
        <dbReference type="ChEBI" id="CHEBI:61977"/>
        <dbReference type="ChEBI" id="CHEBI:83586"/>
        <dbReference type="ChEBI" id="CHEBI:456215"/>
        <dbReference type="ChEBI" id="CHEBI:456216"/>
        <dbReference type="EC" id="2.7.11.32"/>
    </reaction>
</comment>
<comment type="catalytic activity">
    <reaction evidence="1">
        <text>N(tele)-phospho-L-histidyl/O-phospho-L-threonyl-[pyruvate, phosphate dikinase] + phosphate + H(+) = N(tele)-phospho-L-histidyl/L-threonyl-[pyruvate, phosphate dikinase] + diphosphate</text>
        <dbReference type="Rhea" id="RHEA:43696"/>
        <dbReference type="Rhea" id="RHEA-COMP:10650"/>
        <dbReference type="Rhea" id="RHEA-COMP:10651"/>
        <dbReference type="ChEBI" id="CHEBI:15378"/>
        <dbReference type="ChEBI" id="CHEBI:30013"/>
        <dbReference type="ChEBI" id="CHEBI:33019"/>
        <dbReference type="ChEBI" id="CHEBI:43474"/>
        <dbReference type="ChEBI" id="CHEBI:61977"/>
        <dbReference type="ChEBI" id="CHEBI:83586"/>
        <dbReference type="EC" id="2.7.4.27"/>
    </reaction>
</comment>
<comment type="similarity">
    <text evidence="1">Belongs to the pyruvate, phosphate/water dikinase regulatory protein family. PDRP subfamily.</text>
</comment>
<feature type="chain" id="PRO_1000136502" description="Putative pyruvate, phosphate dikinase regulatory protein">
    <location>
        <begin position="1"/>
        <end position="270"/>
    </location>
</feature>
<feature type="binding site" evidence="1">
    <location>
        <begin position="149"/>
        <end position="156"/>
    </location>
    <ligand>
        <name>ADP</name>
        <dbReference type="ChEBI" id="CHEBI:456216"/>
    </ligand>
</feature>
<evidence type="ECO:0000255" key="1">
    <source>
        <dbReference type="HAMAP-Rule" id="MF_00921"/>
    </source>
</evidence>
<sequence>MEEGVSIYLVSDSNVDTAENIASIAAAHFDTFIEKIKKYPYVGDKNQIEEIIMEAANDANSIIIHTMVVPELKDYLLKKAQKFGIKIVDVMGPVINAIEDSTGISPHTNLAKNNKEDYLKKIEVIEFAVKYDDGKDAMGILLADVVVIGVSRTSKTPLCMYLAHKYIKAANLPLVPEIEPPQELFEINPKKIFGLTIDPEVLVKIRKERLKSLGLDANAIYATEERVKKEIKYAEEVMKRLGCTVIDVTNKAVEETANVILNVLKGGEIS</sequence>
<reference key="1">
    <citation type="submission" date="2008-01" db="EMBL/GenBank/DDBJ databases">
        <title>Complete sequence of Thermoanaerobacter sp. X514.</title>
        <authorList>
            <consortium name="US DOE Joint Genome Institute"/>
            <person name="Copeland A."/>
            <person name="Lucas S."/>
            <person name="Lapidus A."/>
            <person name="Barry K."/>
            <person name="Glavina del Rio T."/>
            <person name="Dalin E."/>
            <person name="Tice H."/>
            <person name="Pitluck S."/>
            <person name="Bruce D."/>
            <person name="Goodwin L."/>
            <person name="Saunders E."/>
            <person name="Brettin T."/>
            <person name="Detter J.C."/>
            <person name="Han C."/>
            <person name="Schmutz J."/>
            <person name="Larimer F."/>
            <person name="Land M."/>
            <person name="Hauser L."/>
            <person name="Kyrpides N."/>
            <person name="Kim E."/>
            <person name="Hemme C."/>
            <person name="Fields M.W."/>
            <person name="He Z."/>
            <person name="Zhou J."/>
            <person name="Richardson P."/>
        </authorList>
    </citation>
    <scope>NUCLEOTIDE SEQUENCE [LARGE SCALE GENOMIC DNA]</scope>
    <source>
        <strain>X514</strain>
    </source>
</reference>
<name>PDRP_THEPX</name>
<protein>
    <recommendedName>
        <fullName evidence="1">Putative pyruvate, phosphate dikinase regulatory protein</fullName>
        <shortName evidence="1">PPDK regulatory protein</shortName>
        <ecNumber evidence="1">2.7.11.32</ecNumber>
        <ecNumber evidence="1">2.7.4.27</ecNumber>
    </recommendedName>
</protein>
<organism>
    <name type="scientific">Thermoanaerobacter sp. (strain X514)</name>
    <dbReference type="NCBI Taxonomy" id="399726"/>
    <lineage>
        <taxon>Bacteria</taxon>
        <taxon>Bacillati</taxon>
        <taxon>Bacillota</taxon>
        <taxon>Clostridia</taxon>
        <taxon>Thermoanaerobacterales</taxon>
        <taxon>Thermoanaerobacteraceae</taxon>
        <taxon>Thermoanaerobacter</taxon>
    </lineage>
</organism>
<keyword id="KW-0418">Kinase</keyword>
<keyword id="KW-0547">Nucleotide-binding</keyword>
<keyword id="KW-0723">Serine/threonine-protein kinase</keyword>
<keyword id="KW-0808">Transferase</keyword>
<gene>
    <name type="ordered locus">Teth514_1350</name>
</gene>
<dbReference type="EC" id="2.7.11.32" evidence="1"/>
<dbReference type="EC" id="2.7.4.27" evidence="1"/>
<dbReference type="EMBL" id="CP000923">
    <property type="protein sequence ID" value="ABY92640.1"/>
    <property type="molecule type" value="Genomic_DNA"/>
</dbReference>
<dbReference type="RefSeq" id="WP_003867909.1">
    <property type="nucleotide sequence ID" value="NC_010320.1"/>
</dbReference>
<dbReference type="SMR" id="B0K714"/>
<dbReference type="KEGG" id="tex:Teth514_1350"/>
<dbReference type="HOGENOM" id="CLU_046206_2_1_9"/>
<dbReference type="Proteomes" id="UP000002155">
    <property type="component" value="Chromosome"/>
</dbReference>
<dbReference type="GO" id="GO:0043531">
    <property type="term" value="F:ADP binding"/>
    <property type="evidence" value="ECO:0007669"/>
    <property type="project" value="UniProtKB-UniRule"/>
</dbReference>
<dbReference type="GO" id="GO:0005524">
    <property type="term" value="F:ATP binding"/>
    <property type="evidence" value="ECO:0007669"/>
    <property type="project" value="InterPro"/>
</dbReference>
<dbReference type="GO" id="GO:0016776">
    <property type="term" value="F:phosphotransferase activity, phosphate group as acceptor"/>
    <property type="evidence" value="ECO:0007669"/>
    <property type="project" value="UniProtKB-UniRule"/>
</dbReference>
<dbReference type="GO" id="GO:0004674">
    <property type="term" value="F:protein serine/threonine kinase activity"/>
    <property type="evidence" value="ECO:0007669"/>
    <property type="project" value="UniProtKB-UniRule"/>
</dbReference>
<dbReference type="HAMAP" id="MF_00921">
    <property type="entry name" value="PDRP"/>
    <property type="match status" value="1"/>
</dbReference>
<dbReference type="InterPro" id="IPR005177">
    <property type="entry name" value="Kinase-pyrophosphorylase"/>
</dbReference>
<dbReference type="InterPro" id="IPR026565">
    <property type="entry name" value="PPDK_reg"/>
</dbReference>
<dbReference type="NCBIfam" id="NF003742">
    <property type="entry name" value="PRK05339.1"/>
    <property type="match status" value="1"/>
</dbReference>
<dbReference type="PANTHER" id="PTHR31756">
    <property type="entry name" value="PYRUVATE, PHOSPHATE DIKINASE REGULATORY PROTEIN 1, CHLOROPLASTIC"/>
    <property type="match status" value="1"/>
</dbReference>
<dbReference type="PANTHER" id="PTHR31756:SF3">
    <property type="entry name" value="PYRUVATE, PHOSPHATE DIKINASE REGULATORY PROTEIN 1, CHLOROPLASTIC"/>
    <property type="match status" value="1"/>
</dbReference>
<dbReference type="Pfam" id="PF03618">
    <property type="entry name" value="Kinase-PPPase"/>
    <property type="match status" value="1"/>
</dbReference>